<dbReference type="EMBL" id="CR858607">
    <property type="protein sequence ID" value="CAH90829.1"/>
    <property type="molecule type" value="mRNA"/>
</dbReference>
<dbReference type="RefSeq" id="NP_001125472.1">
    <property type="nucleotide sequence ID" value="NM_001132000.1"/>
</dbReference>
<dbReference type="BMRB" id="Q5RBN1"/>
<dbReference type="SMR" id="Q5RBN1"/>
<dbReference type="STRING" id="9601.ENSPPYP00000006111"/>
<dbReference type="GeneID" id="100172381"/>
<dbReference type="KEGG" id="pon:100172381"/>
<dbReference type="CTD" id="22862"/>
<dbReference type="eggNOG" id="ENOG502QRT8">
    <property type="taxonomic scope" value="Eukaryota"/>
</dbReference>
<dbReference type="InParanoid" id="Q5RBN1"/>
<dbReference type="OrthoDB" id="443915at2759"/>
<dbReference type="Proteomes" id="UP000001595">
    <property type="component" value="Unplaced"/>
</dbReference>
<dbReference type="GO" id="GO:0000139">
    <property type="term" value="C:Golgi membrane"/>
    <property type="evidence" value="ECO:0007669"/>
    <property type="project" value="UniProtKB-SubCell"/>
</dbReference>
<dbReference type="CDD" id="cd00063">
    <property type="entry name" value="FN3"/>
    <property type="match status" value="9"/>
</dbReference>
<dbReference type="FunFam" id="2.60.40.10:FF:000175">
    <property type="entry name" value="Fibronectin type III domain containing 3A"/>
    <property type="match status" value="1"/>
</dbReference>
<dbReference type="FunFam" id="2.60.40.10:FF:000180">
    <property type="entry name" value="Fibronectin type III domain containing 3A"/>
    <property type="match status" value="1"/>
</dbReference>
<dbReference type="FunFam" id="2.60.40.10:FF:000185">
    <property type="entry name" value="Fibronectin type III domain containing 3A"/>
    <property type="match status" value="1"/>
</dbReference>
<dbReference type="FunFam" id="2.60.40.10:FF:000195">
    <property type="entry name" value="Fibronectin type III domain containing 3A"/>
    <property type="match status" value="1"/>
</dbReference>
<dbReference type="FunFam" id="2.60.40.10:FF:000210">
    <property type="entry name" value="Fibronectin type III domain containing 3A"/>
    <property type="match status" value="1"/>
</dbReference>
<dbReference type="FunFam" id="2.60.40.10:FF:000309">
    <property type="entry name" value="Fibronectin type III domain containing 3B"/>
    <property type="match status" value="1"/>
</dbReference>
<dbReference type="FunFam" id="2.60.40.10:FF:000366">
    <property type="entry name" value="fibronectin type-III domain-containing protein 3A isoform X1"/>
    <property type="match status" value="1"/>
</dbReference>
<dbReference type="FunFam" id="2.60.40.10:FF:000373">
    <property type="entry name" value="fibronectin type-III domain-containing protein 3A isoform X1"/>
    <property type="match status" value="1"/>
</dbReference>
<dbReference type="FunFam" id="2.60.40.10:FF:000337">
    <property type="entry name" value="fibronectin type-III domain-containing protein 3A isoform X2"/>
    <property type="match status" value="1"/>
</dbReference>
<dbReference type="Gene3D" id="2.60.40.10">
    <property type="entry name" value="Immunoglobulins"/>
    <property type="match status" value="9"/>
</dbReference>
<dbReference type="InterPro" id="IPR050617">
    <property type="entry name" value="E3_ligase_FN3/SPRY"/>
</dbReference>
<dbReference type="InterPro" id="IPR003961">
    <property type="entry name" value="FN3_dom"/>
</dbReference>
<dbReference type="InterPro" id="IPR036116">
    <property type="entry name" value="FN3_sf"/>
</dbReference>
<dbReference type="InterPro" id="IPR013783">
    <property type="entry name" value="Ig-like_fold"/>
</dbReference>
<dbReference type="PANTHER" id="PTHR24099">
    <property type="entry name" value="E3 UBIQUITIN-PROTEIN LIGASE TRIM36-RELATED"/>
    <property type="match status" value="1"/>
</dbReference>
<dbReference type="PANTHER" id="PTHR24099:SF14">
    <property type="entry name" value="FIBRONECTIN TYPE III DOMAIN CONTAINING 3C2-RELATED"/>
    <property type="match status" value="1"/>
</dbReference>
<dbReference type="Pfam" id="PF00041">
    <property type="entry name" value="fn3"/>
    <property type="match status" value="8"/>
</dbReference>
<dbReference type="PRINTS" id="PR00014">
    <property type="entry name" value="FNTYPEIII"/>
</dbReference>
<dbReference type="SMART" id="SM00060">
    <property type="entry name" value="FN3"/>
    <property type="match status" value="9"/>
</dbReference>
<dbReference type="SUPFAM" id="SSF49265">
    <property type="entry name" value="Fibronectin type III"/>
    <property type="match status" value="6"/>
</dbReference>
<dbReference type="PROSITE" id="PS50853">
    <property type="entry name" value="FN3"/>
    <property type="match status" value="9"/>
</dbReference>
<reference key="1">
    <citation type="submission" date="2004-11" db="EMBL/GenBank/DDBJ databases">
        <authorList>
            <consortium name="The German cDNA consortium"/>
        </authorList>
    </citation>
    <scope>NUCLEOTIDE SEQUENCE [LARGE SCALE MRNA]</scope>
    <source>
        <tissue>Kidney</tissue>
    </source>
</reference>
<name>FND3A_PONAB</name>
<comment type="function">
    <text evidence="1">Mediates spermatid-Sertoli adhesion during spermatogenesis.</text>
</comment>
<comment type="subcellular location">
    <subcellularLocation>
        <location evidence="7">Golgi apparatus membrane</location>
        <topology evidence="7">Single-pass membrane protein</topology>
    </subcellularLocation>
</comment>
<comment type="similarity">
    <text evidence="7">Belongs to the FNDC3 family.</text>
</comment>
<keyword id="KW-0007">Acetylation</keyword>
<keyword id="KW-0333">Golgi apparatus</keyword>
<keyword id="KW-0472">Membrane</keyword>
<keyword id="KW-0597">Phosphoprotein</keyword>
<keyword id="KW-1185">Reference proteome</keyword>
<keyword id="KW-0677">Repeat</keyword>
<keyword id="KW-0812">Transmembrane</keyword>
<keyword id="KW-1133">Transmembrane helix</keyword>
<organism>
    <name type="scientific">Pongo abelii</name>
    <name type="common">Sumatran orangutan</name>
    <name type="synonym">Pongo pygmaeus abelii</name>
    <dbReference type="NCBI Taxonomy" id="9601"/>
    <lineage>
        <taxon>Eukaryota</taxon>
        <taxon>Metazoa</taxon>
        <taxon>Chordata</taxon>
        <taxon>Craniata</taxon>
        <taxon>Vertebrata</taxon>
        <taxon>Euteleostomi</taxon>
        <taxon>Mammalia</taxon>
        <taxon>Eutheria</taxon>
        <taxon>Euarchontoglires</taxon>
        <taxon>Primates</taxon>
        <taxon>Haplorrhini</taxon>
        <taxon>Catarrhini</taxon>
        <taxon>Hominidae</taxon>
        <taxon>Pongo</taxon>
    </lineage>
</organism>
<gene>
    <name type="primary">FNDC3A</name>
    <name type="synonym">FNDC3</name>
</gene>
<feature type="chain" id="PRO_0000379877" description="Fibronectin type-III domain-containing protein 3A">
    <location>
        <begin position="1"/>
        <end position="1142"/>
    </location>
</feature>
<feature type="transmembrane region" description="Helical" evidence="4">
    <location>
        <begin position="1121"/>
        <end position="1141"/>
    </location>
</feature>
<feature type="domain" description="Fibronectin type-III 1" evidence="5">
    <location>
        <begin position="212"/>
        <end position="313"/>
    </location>
</feature>
<feature type="domain" description="Fibronectin type-III 2" evidence="5">
    <location>
        <begin position="317"/>
        <end position="409"/>
    </location>
</feature>
<feature type="domain" description="Fibronectin type-III 3" evidence="5">
    <location>
        <begin position="413"/>
        <end position="506"/>
    </location>
</feature>
<feature type="domain" description="Fibronectin type-III 4" evidence="5">
    <location>
        <begin position="510"/>
        <end position="604"/>
    </location>
</feature>
<feature type="domain" description="Fibronectin type-III 5" evidence="5">
    <location>
        <begin position="608"/>
        <end position="701"/>
    </location>
</feature>
<feature type="domain" description="Fibronectin type-III 6" evidence="5">
    <location>
        <begin position="705"/>
        <end position="795"/>
    </location>
</feature>
<feature type="domain" description="Fibronectin type-III 7" evidence="5">
    <location>
        <begin position="805"/>
        <end position="894"/>
    </location>
</feature>
<feature type="domain" description="Fibronectin type-III 8" evidence="5">
    <location>
        <begin position="895"/>
        <end position="989"/>
    </location>
</feature>
<feature type="domain" description="Fibronectin type-III 9" evidence="5">
    <location>
        <begin position="990"/>
        <end position="1095"/>
    </location>
</feature>
<feature type="region of interest" description="Disordered" evidence="6">
    <location>
        <begin position="104"/>
        <end position="191"/>
    </location>
</feature>
<feature type="compositionally biased region" description="Basic and acidic residues" evidence="6">
    <location>
        <begin position="107"/>
        <end position="145"/>
    </location>
</feature>
<feature type="compositionally biased region" description="Low complexity" evidence="6">
    <location>
        <begin position="146"/>
        <end position="158"/>
    </location>
</feature>
<feature type="modified residue" description="Phosphoserine" evidence="3">
    <location>
        <position position="147"/>
    </location>
</feature>
<feature type="modified residue" description="Phosphoserine" evidence="2">
    <location>
        <position position="151"/>
    </location>
</feature>
<feature type="modified residue" description="Phosphoserine" evidence="3">
    <location>
        <position position="157"/>
    </location>
</feature>
<feature type="modified residue" description="N6-acetyllysine" evidence="3">
    <location>
        <position position="328"/>
    </location>
</feature>
<sequence>MSGPAQVPMMSPNGSVPPIYVPPGYAPQVIEDNGVRRVVVVPQAPEFHPGGHTVLHRSPHPPLPGFIPVPTMMPPPPRHMYSPVTGAGDMTTQYMPQYQSSQVYGDVDAHSTHGRSNFRDERSSKTYERLQKKLKDRQGTQKDKMSSPPSSPQKCPSPINEHNGLIKGQNAGGINTGSAKIKSGKGKGGTQVDTEIEEKDEETKAFEALLSNIVKPVASDIQARTVVLTWSPPSSLINGETDESSVPELYGYEVLISSTGKDGKYKSVYIGEETNITLNDLKPATDYHAKVQAEYNSIKGTPSEAEIFTTLSCEPDIPNPPRIANRTKNSLTLQWKAPSDNGSKIQNFVLEWDEGKGNGEFYQCYMGSQKQFKITKLSPAMGCKFRLSARNDYGTSGFSEEVLYYTSGCAPSMPASPVLTKAGITWLSLQWSKPSGTPSDEGISYILEMEEETSGYGFKPKYDGEDLAYTVKNLRRSTKYKFKVIAYNSEGKSNPSEVVEFTTCPDKPGIPVKPSVKGKIHSHSFKITWDPPKDNGGAAINKYVVEMAEGSNGNKWEMIYSGATREHLCDRLNPGCFYRLRVYCISDGGQSAVSESLLVQTPAVPPGPCLPPRLQGRPKAKEIQLRWGPPLVDGGSPISCYSVEMSPIEKDEPREVYQGSEVECTVSSLLPGKTYSFRLRAANKMGFGPFSEKCDITTAPGPPDQCKPPQVTCRSATCAQVNWEVPLSNGTDVTEYRLEWGGVEGSMQICYCGPGLNYEIKGLSPATTYYCRVQALSVVGAGPFSEVVACVTPPSVPGIVTCLQEISDDEIENPHYSPSTCLAISWEKPCDHGSEILAYSIDSGDKQSLTVGKVTSYIINNLQPDTTYRIRIQALNSLGAGPFSHVIKLKTKPLPPDPPRLECVAFSHQNLKLKWGEGTPKTLSTDSIQYHLQMEDKNGRFVSLYRGPCHTYKVQRLNESTSYKFCIQACNEAGEGPVSQEYIFTTPKSVPAALKAPKIEKVNDHICEITWECLQPMKGDPVIYSLQVMLGKDSEFKQIYKGPDSSFRYSSLQLNCEYRFRVCAIRQCQDSLGHQDLVGPYSTTVLFISQRTEPPASTNRDTVESTRTRRALSDEQCAAVNLVLFAFFSILIAFIIQYFVIK</sequence>
<protein>
    <recommendedName>
        <fullName>Fibronectin type-III domain-containing protein 3A</fullName>
    </recommendedName>
</protein>
<accession>Q5RBN1</accession>
<evidence type="ECO:0000250" key="1"/>
<evidence type="ECO:0000250" key="2">
    <source>
        <dbReference type="UniProtKB" id="Q8BX90"/>
    </source>
</evidence>
<evidence type="ECO:0000250" key="3">
    <source>
        <dbReference type="UniProtKB" id="Q9Y2H6"/>
    </source>
</evidence>
<evidence type="ECO:0000255" key="4"/>
<evidence type="ECO:0000255" key="5">
    <source>
        <dbReference type="PROSITE-ProRule" id="PRU00316"/>
    </source>
</evidence>
<evidence type="ECO:0000256" key="6">
    <source>
        <dbReference type="SAM" id="MobiDB-lite"/>
    </source>
</evidence>
<evidence type="ECO:0000305" key="7"/>
<proteinExistence type="evidence at transcript level"/>